<dbReference type="EC" id="4.3.2.1" evidence="1"/>
<dbReference type="EMBL" id="LT708304">
    <property type="protein sequence ID" value="SIU00290.1"/>
    <property type="molecule type" value="Genomic_DNA"/>
</dbReference>
<dbReference type="RefSeq" id="NP_855339.1">
    <property type="nucleotide sequence ID" value="NC_002945.3"/>
</dbReference>
<dbReference type="RefSeq" id="WP_003408180.1">
    <property type="nucleotide sequence ID" value="NC_002945.4"/>
</dbReference>
<dbReference type="SMR" id="P0A4Z1"/>
<dbReference type="KEGG" id="mbo:BQ2027_MB1687"/>
<dbReference type="PATRIC" id="fig|233413.5.peg.1840"/>
<dbReference type="UniPathway" id="UPA00068">
    <property type="reaction ID" value="UER00114"/>
</dbReference>
<dbReference type="Proteomes" id="UP000001419">
    <property type="component" value="Chromosome"/>
</dbReference>
<dbReference type="GO" id="GO:0005829">
    <property type="term" value="C:cytosol"/>
    <property type="evidence" value="ECO:0007669"/>
    <property type="project" value="TreeGrafter"/>
</dbReference>
<dbReference type="GO" id="GO:0004056">
    <property type="term" value="F:argininosuccinate lyase activity"/>
    <property type="evidence" value="ECO:0007669"/>
    <property type="project" value="UniProtKB-UniRule"/>
</dbReference>
<dbReference type="GO" id="GO:0042450">
    <property type="term" value="P:arginine biosynthetic process via ornithine"/>
    <property type="evidence" value="ECO:0007669"/>
    <property type="project" value="InterPro"/>
</dbReference>
<dbReference type="GO" id="GO:0006526">
    <property type="term" value="P:L-arginine biosynthetic process"/>
    <property type="evidence" value="ECO:0007669"/>
    <property type="project" value="UniProtKB-UniRule"/>
</dbReference>
<dbReference type="CDD" id="cd01359">
    <property type="entry name" value="Argininosuccinate_lyase"/>
    <property type="match status" value="1"/>
</dbReference>
<dbReference type="FunFam" id="1.10.40.30:FF:000001">
    <property type="entry name" value="Argininosuccinate lyase"/>
    <property type="match status" value="1"/>
</dbReference>
<dbReference type="FunFam" id="1.20.200.10:FF:000015">
    <property type="entry name" value="argininosuccinate lyase isoform X2"/>
    <property type="match status" value="1"/>
</dbReference>
<dbReference type="Gene3D" id="1.10.40.30">
    <property type="entry name" value="Fumarase/aspartase (C-terminal domain)"/>
    <property type="match status" value="1"/>
</dbReference>
<dbReference type="Gene3D" id="1.20.200.10">
    <property type="entry name" value="Fumarase/aspartase (Central domain)"/>
    <property type="match status" value="1"/>
</dbReference>
<dbReference type="Gene3D" id="1.10.275.10">
    <property type="entry name" value="Fumarase/aspartase (N-terminal domain)"/>
    <property type="match status" value="1"/>
</dbReference>
<dbReference type="HAMAP" id="MF_00006">
    <property type="entry name" value="Arg_succ_lyase"/>
    <property type="match status" value="1"/>
</dbReference>
<dbReference type="InterPro" id="IPR029419">
    <property type="entry name" value="Arg_succ_lyase_C"/>
</dbReference>
<dbReference type="InterPro" id="IPR009049">
    <property type="entry name" value="Argininosuccinate_lyase"/>
</dbReference>
<dbReference type="InterPro" id="IPR024083">
    <property type="entry name" value="Fumarase/histidase_N"/>
</dbReference>
<dbReference type="InterPro" id="IPR020557">
    <property type="entry name" value="Fumarate_lyase_CS"/>
</dbReference>
<dbReference type="InterPro" id="IPR000362">
    <property type="entry name" value="Fumarate_lyase_fam"/>
</dbReference>
<dbReference type="InterPro" id="IPR022761">
    <property type="entry name" value="Fumarate_lyase_N"/>
</dbReference>
<dbReference type="InterPro" id="IPR008948">
    <property type="entry name" value="L-Aspartase-like"/>
</dbReference>
<dbReference type="NCBIfam" id="TIGR00838">
    <property type="entry name" value="argH"/>
    <property type="match status" value="1"/>
</dbReference>
<dbReference type="PANTHER" id="PTHR43814">
    <property type="entry name" value="ARGININOSUCCINATE LYASE"/>
    <property type="match status" value="1"/>
</dbReference>
<dbReference type="PANTHER" id="PTHR43814:SF1">
    <property type="entry name" value="ARGININOSUCCINATE LYASE"/>
    <property type="match status" value="1"/>
</dbReference>
<dbReference type="Pfam" id="PF14698">
    <property type="entry name" value="ASL_C2"/>
    <property type="match status" value="1"/>
</dbReference>
<dbReference type="Pfam" id="PF00206">
    <property type="entry name" value="Lyase_1"/>
    <property type="match status" value="1"/>
</dbReference>
<dbReference type="PRINTS" id="PR00145">
    <property type="entry name" value="ARGSUCLYASE"/>
</dbReference>
<dbReference type="PRINTS" id="PR00149">
    <property type="entry name" value="FUMRATELYASE"/>
</dbReference>
<dbReference type="SUPFAM" id="SSF48557">
    <property type="entry name" value="L-aspartase-like"/>
    <property type="match status" value="1"/>
</dbReference>
<dbReference type="PROSITE" id="PS00163">
    <property type="entry name" value="FUMARATE_LYASES"/>
    <property type="match status" value="1"/>
</dbReference>
<keyword id="KW-0028">Amino-acid biosynthesis</keyword>
<keyword id="KW-0055">Arginine biosynthesis</keyword>
<keyword id="KW-0963">Cytoplasm</keyword>
<keyword id="KW-0456">Lyase</keyword>
<keyword id="KW-1185">Reference proteome</keyword>
<reference key="1">
    <citation type="journal article" date="2003" name="Proc. Natl. Acad. Sci. U.S.A.">
        <title>The complete genome sequence of Mycobacterium bovis.</title>
        <authorList>
            <person name="Garnier T."/>
            <person name="Eiglmeier K."/>
            <person name="Camus J.-C."/>
            <person name="Medina N."/>
            <person name="Mansoor H."/>
            <person name="Pryor M."/>
            <person name="Duthoy S."/>
            <person name="Grondin S."/>
            <person name="Lacroix C."/>
            <person name="Monsempe C."/>
            <person name="Simon S."/>
            <person name="Harris B."/>
            <person name="Atkin R."/>
            <person name="Doggett J."/>
            <person name="Mayes R."/>
            <person name="Keating L."/>
            <person name="Wheeler P.R."/>
            <person name="Parkhill J."/>
            <person name="Barrell B.G."/>
            <person name="Cole S.T."/>
            <person name="Gordon S.V."/>
            <person name="Hewinson R.G."/>
        </authorList>
    </citation>
    <scope>NUCLEOTIDE SEQUENCE [LARGE SCALE GENOMIC DNA]</scope>
    <source>
        <strain>ATCC BAA-935 / AF2122/97</strain>
    </source>
</reference>
<reference key="2">
    <citation type="journal article" date="2017" name="Genome Announc.">
        <title>Updated reference genome sequence and annotation of Mycobacterium bovis AF2122/97.</title>
        <authorList>
            <person name="Malone K.M."/>
            <person name="Farrell D."/>
            <person name="Stuber T.P."/>
            <person name="Schubert O.T."/>
            <person name="Aebersold R."/>
            <person name="Robbe-Austerman S."/>
            <person name="Gordon S.V."/>
        </authorList>
    </citation>
    <scope>NUCLEOTIDE SEQUENCE [LARGE SCALE GENOMIC DNA]</scope>
    <scope>GENOME REANNOTATION</scope>
    <source>
        <strain>ATCC BAA-935 / AF2122/97</strain>
    </source>
</reference>
<organism>
    <name type="scientific">Mycobacterium bovis (strain ATCC BAA-935 / AF2122/97)</name>
    <dbReference type="NCBI Taxonomy" id="233413"/>
    <lineage>
        <taxon>Bacteria</taxon>
        <taxon>Bacillati</taxon>
        <taxon>Actinomycetota</taxon>
        <taxon>Actinomycetes</taxon>
        <taxon>Mycobacteriales</taxon>
        <taxon>Mycobacteriaceae</taxon>
        <taxon>Mycobacterium</taxon>
        <taxon>Mycobacterium tuberculosis complex</taxon>
    </lineage>
</organism>
<comment type="catalytic activity">
    <reaction evidence="1">
        <text>2-(N(omega)-L-arginino)succinate = fumarate + L-arginine</text>
        <dbReference type="Rhea" id="RHEA:24020"/>
        <dbReference type="ChEBI" id="CHEBI:29806"/>
        <dbReference type="ChEBI" id="CHEBI:32682"/>
        <dbReference type="ChEBI" id="CHEBI:57472"/>
        <dbReference type="EC" id="4.3.2.1"/>
    </reaction>
</comment>
<comment type="pathway">
    <text evidence="1">Amino-acid biosynthesis; L-arginine biosynthesis; L-arginine from L-ornithine and carbamoyl phosphate: step 3/3.</text>
</comment>
<comment type="subcellular location">
    <subcellularLocation>
        <location evidence="1">Cytoplasm</location>
    </subcellularLocation>
</comment>
<comment type="similarity">
    <text evidence="1">Belongs to the lyase 1 family. Argininosuccinate lyase subfamily.</text>
</comment>
<sequence>MSTNEGSLWGGRFAGGPSDALAALSKSTHFDWVLAPYDLTASRAHTMVLFRAGLLTEEQRDGLLAGLDSLAQDVADGSFGPLVTDEDVHAALERGLIDRVGPDLGGRLRAGRSRNDQVAALFRMWLRDAVRRVATGVLDVVGALAEQAAAHPSAIMPGKTHLQSAQPILLAHHLLAHAHPLLRDLDRIVDFDKRAAVSPYGSGALAGSSLGLDPDAIAADLGFSAAADNSVDATAARDFAAEAAFVFAMIAVDLSRLAEDIIVWSSTEFGYVTLHDSWSTGSSIMPQKKNPDIAELARGKSGRLIGNLAGLLATLKAQPLAYNRDLQEDKEPVFDSVAQLELLLPAMAGLVASLTFNVQRMAELAPAGYTLATDLAEWLVRQGVPFRSAHEAAGAAVRAAEQRGVGLQELTDDELAAISPELTPQVREVLTIEGSVSARDCRGGTAPGRVAEQLNAIGEAAERLRRQLVR</sequence>
<feature type="chain" id="PRO_0000137790" description="Argininosuccinate lyase">
    <location>
        <begin position="1"/>
        <end position="470"/>
    </location>
</feature>
<name>ARLY_MYCBO</name>
<evidence type="ECO:0000255" key="1">
    <source>
        <dbReference type="HAMAP-Rule" id="MF_00006"/>
    </source>
</evidence>
<accession>P0A4Z1</accession>
<accession>A0A1R3XYZ2</accession>
<accession>P94994</accession>
<accession>X2BIX5</accession>
<protein>
    <recommendedName>
        <fullName evidence="1">Argininosuccinate lyase</fullName>
        <shortName evidence="1">ASAL</shortName>
        <ecNumber evidence="1">4.3.2.1</ecNumber>
    </recommendedName>
    <alternativeName>
        <fullName evidence="1">Arginosuccinase</fullName>
    </alternativeName>
</protein>
<gene>
    <name evidence="1" type="primary">argH</name>
    <name type="ordered locus">BQ2027_MB1687</name>
</gene>
<proteinExistence type="inferred from homology"/>